<organism>
    <name type="scientific">Mycobacterium tuberculosis (strain CDC 1551 / Oshkosh)</name>
    <dbReference type="NCBI Taxonomy" id="83331"/>
    <lineage>
        <taxon>Bacteria</taxon>
        <taxon>Bacillati</taxon>
        <taxon>Actinomycetota</taxon>
        <taxon>Actinomycetes</taxon>
        <taxon>Mycobacteriales</taxon>
        <taxon>Mycobacteriaceae</taxon>
        <taxon>Mycobacterium</taxon>
        <taxon>Mycobacterium tuberculosis complex</taxon>
    </lineage>
</organism>
<proteinExistence type="predicted"/>
<protein>
    <recommendedName>
        <fullName>Uncharacterized protein MT1363.1</fullName>
    </recommendedName>
</protein>
<evidence type="ECO:0000256" key="1">
    <source>
        <dbReference type="SAM" id="MobiDB-lite"/>
    </source>
</evidence>
<gene>
    <name type="ordered locus">MT1363.1</name>
</gene>
<accession>P9WM26</accession>
<accession>L0T920</accession>
<accession>P64805</accession>
<accession>Q10635</accession>
<sequence>MARRRKPLHRQRPEPPSWALRRVEAGPDGHEYEVRPVAAARAVKTYRCPGCDHEIRSGTAHVVVWPTDLPQAGVDDRRHWHTPCWANRATRGPTRKWT</sequence>
<keyword id="KW-1185">Reference proteome</keyword>
<reference key="1">
    <citation type="journal article" date="2002" name="J. Bacteriol.">
        <title>Whole-genome comparison of Mycobacterium tuberculosis clinical and laboratory strains.</title>
        <authorList>
            <person name="Fleischmann R.D."/>
            <person name="Alland D."/>
            <person name="Eisen J.A."/>
            <person name="Carpenter L."/>
            <person name="White O."/>
            <person name="Peterson J.D."/>
            <person name="DeBoy R.T."/>
            <person name="Dodson R.J."/>
            <person name="Gwinn M.L."/>
            <person name="Haft D.H."/>
            <person name="Hickey E.K."/>
            <person name="Kolonay J.F."/>
            <person name="Nelson W.C."/>
            <person name="Umayam L.A."/>
            <person name="Ermolaeva M.D."/>
            <person name="Salzberg S.L."/>
            <person name="Delcher A."/>
            <person name="Utterback T.R."/>
            <person name="Weidman J.F."/>
            <person name="Khouri H.M."/>
            <person name="Gill J."/>
            <person name="Mikula A."/>
            <person name="Bishai W."/>
            <person name="Jacobs W.R. Jr."/>
            <person name="Venter J.C."/>
            <person name="Fraser C.M."/>
        </authorList>
    </citation>
    <scope>NUCLEOTIDE SEQUENCE [LARGE SCALE GENOMIC DNA]</scope>
    <source>
        <strain>CDC 1551 / Oshkosh</strain>
    </source>
</reference>
<dbReference type="EMBL" id="AE000516">
    <property type="protein sequence ID" value="AAK45626.1"/>
    <property type="molecule type" value="Genomic_DNA"/>
</dbReference>
<dbReference type="PIR" id="F70769">
    <property type="entry name" value="F70769"/>
</dbReference>
<dbReference type="RefSeq" id="WP_003898823.1">
    <property type="nucleotide sequence ID" value="NZ_KK341227.1"/>
</dbReference>
<dbReference type="KEGG" id="mtc:MT1363.1"/>
<dbReference type="HOGENOM" id="CLU_133073_0_0_11"/>
<dbReference type="Proteomes" id="UP000001020">
    <property type="component" value="Chromosome"/>
</dbReference>
<feature type="chain" id="PRO_0000427377" description="Uncharacterized protein MT1363.1">
    <location>
        <begin position="1"/>
        <end position="98"/>
    </location>
</feature>
<feature type="region of interest" description="Disordered" evidence="1">
    <location>
        <begin position="1"/>
        <end position="21"/>
    </location>
</feature>
<feature type="compositionally biased region" description="Basic residues" evidence="1">
    <location>
        <begin position="1"/>
        <end position="10"/>
    </location>
</feature>
<name>Y1322_MYCTO</name>